<keyword id="KW-0963">Cytoplasm</keyword>
<keyword id="KW-0570">Pentose shunt</keyword>
<keyword id="KW-1185">Reference proteome</keyword>
<keyword id="KW-0704">Schiff base</keyword>
<keyword id="KW-0808">Transferase</keyword>
<gene>
    <name evidence="1" type="primary">tal</name>
    <name type="ordered locus">Adeh_4063</name>
</gene>
<feature type="chain" id="PRO_1000126272" description="Probable transaldolase">
    <location>
        <begin position="1"/>
        <end position="217"/>
    </location>
</feature>
<feature type="active site" description="Schiff-base intermediate with substrate" evidence="1">
    <location>
        <position position="83"/>
    </location>
</feature>
<organism>
    <name type="scientific">Anaeromyxobacter dehalogenans (strain 2CP-C)</name>
    <dbReference type="NCBI Taxonomy" id="290397"/>
    <lineage>
        <taxon>Bacteria</taxon>
        <taxon>Pseudomonadati</taxon>
        <taxon>Myxococcota</taxon>
        <taxon>Myxococcia</taxon>
        <taxon>Myxococcales</taxon>
        <taxon>Cystobacterineae</taxon>
        <taxon>Anaeromyxobacteraceae</taxon>
        <taxon>Anaeromyxobacter</taxon>
    </lineage>
</organism>
<evidence type="ECO:0000255" key="1">
    <source>
        <dbReference type="HAMAP-Rule" id="MF_00494"/>
    </source>
</evidence>
<comment type="function">
    <text evidence="1">Transaldolase is important for the balance of metabolites in the pentose-phosphate pathway.</text>
</comment>
<comment type="catalytic activity">
    <reaction evidence="1">
        <text>D-sedoheptulose 7-phosphate + D-glyceraldehyde 3-phosphate = D-erythrose 4-phosphate + beta-D-fructose 6-phosphate</text>
        <dbReference type="Rhea" id="RHEA:17053"/>
        <dbReference type="ChEBI" id="CHEBI:16897"/>
        <dbReference type="ChEBI" id="CHEBI:57483"/>
        <dbReference type="ChEBI" id="CHEBI:57634"/>
        <dbReference type="ChEBI" id="CHEBI:59776"/>
        <dbReference type="EC" id="2.2.1.2"/>
    </reaction>
</comment>
<comment type="pathway">
    <text evidence="1">Carbohydrate degradation; pentose phosphate pathway; D-glyceraldehyde 3-phosphate and beta-D-fructose 6-phosphate from D-ribose 5-phosphate and D-xylulose 5-phosphate (non-oxidative stage): step 2/3.</text>
</comment>
<comment type="subcellular location">
    <subcellularLocation>
        <location evidence="1">Cytoplasm</location>
    </subcellularLocation>
</comment>
<comment type="similarity">
    <text evidence="1">Belongs to the transaldolase family. Type 3B subfamily.</text>
</comment>
<name>TAL_ANADE</name>
<sequence>MKFFIDTADVGEIKKALALGLCDGVTTNPSLVAKTGRGFEDVLKEIVQLVPGPISAEVTATDYEGMLREGRHYAKFGSQVVIKVPLTVEGLRAVKTLTDEGTKVNVTLCFSPVQALLAAKAGATYISPFVGRLDDISQDGMAMVADIVQIYRNYGFKTQVLVASVRHPVHVLEAAKLGADVATIPYSVIEQLAKHPLTDAGLKKFLADWEKVPKAAK</sequence>
<protein>
    <recommendedName>
        <fullName evidence="1">Probable transaldolase</fullName>
        <ecNumber evidence="1">2.2.1.2</ecNumber>
    </recommendedName>
</protein>
<reference key="1">
    <citation type="submission" date="2006-01" db="EMBL/GenBank/DDBJ databases">
        <title>Complete sequence of Anaeromyxobacter dehalogenans 2CP-C.</title>
        <authorList>
            <person name="Copeland A."/>
            <person name="Lucas S."/>
            <person name="Lapidus A."/>
            <person name="Barry K."/>
            <person name="Detter J.C."/>
            <person name="Glavina T."/>
            <person name="Hammon N."/>
            <person name="Israni S."/>
            <person name="Pitluck S."/>
            <person name="Brettin T."/>
            <person name="Bruce D."/>
            <person name="Han C."/>
            <person name="Tapia R."/>
            <person name="Gilna P."/>
            <person name="Kiss H."/>
            <person name="Schmutz J."/>
            <person name="Larimer F."/>
            <person name="Land M."/>
            <person name="Kyrpides N."/>
            <person name="Anderson I."/>
            <person name="Sanford R.A."/>
            <person name="Ritalahti K.M."/>
            <person name="Thomas H.S."/>
            <person name="Kirby J.R."/>
            <person name="Zhulin I.B."/>
            <person name="Loeffler F.E."/>
            <person name="Richardson P."/>
        </authorList>
    </citation>
    <scope>NUCLEOTIDE SEQUENCE [LARGE SCALE GENOMIC DNA]</scope>
    <source>
        <strain>2CP-C</strain>
    </source>
</reference>
<accession>Q2IGW6</accession>
<dbReference type="EC" id="2.2.1.2" evidence="1"/>
<dbReference type="EMBL" id="CP000251">
    <property type="protein sequence ID" value="ABC83827.1"/>
    <property type="molecule type" value="Genomic_DNA"/>
</dbReference>
<dbReference type="RefSeq" id="WP_011423109.1">
    <property type="nucleotide sequence ID" value="NC_007760.1"/>
</dbReference>
<dbReference type="SMR" id="Q2IGW6"/>
<dbReference type="STRING" id="290397.Adeh_4063"/>
<dbReference type="KEGG" id="ade:Adeh_4063"/>
<dbReference type="eggNOG" id="COG0176">
    <property type="taxonomic scope" value="Bacteria"/>
</dbReference>
<dbReference type="HOGENOM" id="CLU_079764_0_0_7"/>
<dbReference type="OrthoDB" id="9807051at2"/>
<dbReference type="UniPathway" id="UPA00115">
    <property type="reaction ID" value="UER00414"/>
</dbReference>
<dbReference type="Proteomes" id="UP000001935">
    <property type="component" value="Chromosome"/>
</dbReference>
<dbReference type="GO" id="GO:0005737">
    <property type="term" value="C:cytoplasm"/>
    <property type="evidence" value="ECO:0007669"/>
    <property type="project" value="UniProtKB-SubCell"/>
</dbReference>
<dbReference type="GO" id="GO:0016832">
    <property type="term" value="F:aldehyde-lyase activity"/>
    <property type="evidence" value="ECO:0007669"/>
    <property type="project" value="InterPro"/>
</dbReference>
<dbReference type="GO" id="GO:0004801">
    <property type="term" value="F:transaldolase activity"/>
    <property type="evidence" value="ECO:0007669"/>
    <property type="project" value="UniProtKB-UniRule"/>
</dbReference>
<dbReference type="GO" id="GO:0005975">
    <property type="term" value="P:carbohydrate metabolic process"/>
    <property type="evidence" value="ECO:0007669"/>
    <property type="project" value="InterPro"/>
</dbReference>
<dbReference type="GO" id="GO:0006098">
    <property type="term" value="P:pentose-phosphate shunt"/>
    <property type="evidence" value="ECO:0007669"/>
    <property type="project" value="UniProtKB-UniRule"/>
</dbReference>
<dbReference type="CDD" id="cd00956">
    <property type="entry name" value="Transaldolase_FSA"/>
    <property type="match status" value="1"/>
</dbReference>
<dbReference type="FunFam" id="3.20.20.70:FF:000018">
    <property type="entry name" value="Probable transaldolase"/>
    <property type="match status" value="1"/>
</dbReference>
<dbReference type="Gene3D" id="3.20.20.70">
    <property type="entry name" value="Aldolase class I"/>
    <property type="match status" value="1"/>
</dbReference>
<dbReference type="HAMAP" id="MF_00494">
    <property type="entry name" value="Transaldolase_3b"/>
    <property type="match status" value="1"/>
</dbReference>
<dbReference type="InterPro" id="IPR013785">
    <property type="entry name" value="Aldolase_TIM"/>
</dbReference>
<dbReference type="InterPro" id="IPR001585">
    <property type="entry name" value="TAL/FSA"/>
</dbReference>
<dbReference type="InterPro" id="IPR022999">
    <property type="entry name" value="Transaldolase_3B"/>
</dbReference>
<dbReference type="InterPro" id="IPR004731">
    <property type="entry name" value="Transaldolase_3B/F6P_aldolase"/>
</dbReference>
<dbReference type="InterPro" id="IPR018225">
    <property type="entry name" value="Transaldolase_AS"/>
</dbReference>
<dbReference type="InterPro" id="IPR033919">
    <property type="entry name" value="TSA/FSA_arc/bac"/>
</dbReference>
<dbReference type="NCBIfam" id="TIGR00875">
    <property type="entry name" value="fsa_talC_mipB"/>
    <property type="match status" value="1"/>
</dbReference>
<dbReference type="PANTHER" id="PTHR10683:SF40">
    <property type="entry name" value="FRUCTOSE-6-PHOSPHATE ALDOLASE 1-RELATED"/>
    <property type="match status" value="1"/>
</dbReference>
<dbReference type="PANTHER" id="PTHR10683">
    <property type="entry name" value="TRANSALDOLASE"/>
    <property type="match status" value="1"/>
</dbReference>
<dbReference type="Pfam" id="PF00923">
    <property type="entry name" value="TAL_FSA"/>
    <property type="match status" value="1"/>
</dbReference>
<dbReference type="SUPFAM" id="SSF51569">
    <property type="entry name" value="Aldolase"/>
    <property type="match status" value="1"/>
</dbReference>
<dbReference type="PROSITE" id="PS01054">
    <property type="entry name" value="TRANSALDOLASE_1"/>
    <property type="match status" value="1"/>
</dbReference>
<dbReference type="PROSITE" id="PS00958">
    <property type="entry name" value="TRANSALDOLASE_2"/>
    <property type="match status" value="1"/>
</dbReference>
<proteinExistence type="inferred from homology"/>